<name>RR19_CHLRE</name>
<proteinExistence type="evidence at protein level"/>
<dbReference type="EMBL" id="FJ423446">
    <property type="protein sequence ID" value="ACJ50103.1"/>
    <property type="molecule type" value="Genomic_DNA"/>
</dbReference>
<dbReference type="EMBL" id="BK000554">
    <property type="protein sequence ID" value="DAA00916.1"/>
    <property type="molecule type" value="Genomic_DNA"/>
</dbReference>
<dbReference type="RefSeq" id="NP_958370.1">
    <property type="nucleotide sequence ID" value="NC_005353.1"/>
</dbReference>
<dbReference type="SMR" id="P59776"/>
<dbReference type="FunCoup" id="P59776">
    <property type="interactions" value="47"/>
</dbReference>
<dbReference type="STRING" id="3055.P59776"/>
<dbReference type="PaxDb" id="3055-DAA00916"/>
<dbReference type="GeneID" id="2717056"/>
<dbReference type="KEGG" id="cre:ChreCp013"/>
<dbReference type="eggNOG" id="KOG0899">
    <property type="taxonomic scope" value="Eukaryota"/>
</dbReference>
<dbReference type="HOGENOM" id="CLU_144911_0_1_1"/>
<dbReference type="InParanoid" id="P59776"/>
<dbReference type="Proteomes" id="UP000006906">
    <property type="component" value="Chloroplast"/>
</dbReference>
<dbReference type="GO" id="GO:0009507">
    <property type="term" value="C:chloroplast"/>
    <property type="evidence" value="ECO:0007669"/>
    <property type="project" value="UniProtKB-SubCell"/>
</dbReference>
<dbReference type="GO" id="GO:0005763">
    <property type="term" value="C:mitochondrial small ribosomal subunit"/>
    <property type="evidence" value="ECO:0000318"/>
    <property type="project" value="GO_Central"/>
</dbReference>
<dbReference type="GO" id="GO:0019843">
    <property type="term" value="F:rRNA binding"/>
    <property type="evidence" value="ECO:0007669"/>
    <property type="project" value="UniProtKB-UniRule"/>
</dbReference>
<dbReference type="GO" id="GO:0003735">
    <property type="term" value="F:structural constituent of ribosome"/>
    <property type="evidence" value="ECO:0000318"/>
    <property type="project" value="GO_Central"/>
</dbReference>
<dbReference type="GO" id="GO:0000028">
    <property type="term" value="P:ribosomal small subunit assembly"/>
    <property type="evidence" value="ECO:0000318"/>
    <property type="project" value="GO_Central"/>
</dbReference>
<dbReference type="GO" id="GO:0006412">
    <property type="term" value="P:translation"/>
    <property type="evidence" value="ECO:0007669"/>
    <property type="project" value="UniProtKB-UniRule"/>
</dbReference>
<dbReference type="FunFam" id="3.30.860.10:FF:000001">
    <property type="entry name" value="30S ribosomal protein S19"/>
    <property type="match status" value="1"/>
</dbReference>
<dbReference type="Gene3D" id="3.30.860.10">
    <property type="entry name" value="30s Ribosomal Protein S19, Chain A"/>
    <property type="match status" value="1"/>
</dbReference>
<dbReference type="HAMAP" id="MF_00531">
    <property type="entry name" value="Ribosomal_uS19"/>
    <property type="match status" value="1"/>
</dbReference>
<dbReference type="InterPro" id="IPR002222">
    <property type="entry name" value="Ribosomal_uS19"/>
</dbReference>
<dbReference type="InterPro" id="IPR005732">
    <property type="entry name" value="Ribosomal_uS19_bac-type"/>
</dbReference>
<dbReference type="InterPro" id="IPR020934">
    <property type="entry name" value="Ribosomal_uS19_CS"/>
</dbReference>
<dbReference type="InterPro" id="IPR023575">
    <property type="entry name" value="Ribosomal_uS19_SF"/>
</dbReference>
<dbReference type="NCBIfam" id="TIGR01050">
    <property type="entry name" value="rpsS_bact"/>
    <property type="match status" value="1"/>
</dbReference>
<dbReference type="PANTHER" id="PTHR11880">
    <property type="entry name" value="RIBOSOMAL PROTEIN S19P FAMILY MEMBER"/>
    <property type="match status" value="1"/>
</dbReference>
<dbReference type="PANTHER" id="PTHR11880:SF8">
    <property type="entry name" value="SMALL RIBOSOMAL SUBUNIT PROTEIN US19M"/>
    <property type="match status" value="1"/>
</dbReference>
<dbReference type="Pfam" id="PF00203">
    <property type="entry name" value="Ribosomal_S19"/>
    <property type="match status" value="1"/>
</dbReference>
<dbReference type="PIRSF" id="PIRSF002144">
    <property type="entry name" value="Ribosomal_S19"/>
    <property type="match status" value="1"/>
</dbReference>
<dbReference type="PRINTS" id="PR00975">
    <property type="entry name" value="RIBOSOMALS19"/>
</dbReference>
<dbReference type="SUPFAM" id="SSF54570">
    <property type="entry name" value="Ribosomal protein S19"/>
    <property type="match status" value="1"/>
</dbReference>
<dbReference type="PROSITE" id="PS00323">
    <property type="entry name" value="RIBOSOMAL_S19"/>
    <property type="match status" value="1"/>
</dbReference>
<accession>P59776</accession>
<accession>B7U1F6</accession>
<protein>
    <recommendedName>
        <fullName evidence="3">Small ribosomal subunit protein uS19c</fullName>
    </recommendedName>
    <alternativeName>
        <fullName>30S ribosomal protein S19, chloroplastic</fullName>
    </alternativeName>
</protein>
<comment type="function">
    <text evidence="1">Protein S19 forms a complex with S13 that binds strongly to the 16S ribosomal RNA.</text>
</comment>
<comment type="subcellular location">
    <subcellularLocation>
        <location>Plastid</location>
        <location>Chloroplast</location>
    </subcellularLocation>
</comment>
<comment type="similarity">
    <text evidence="3">Belongs to the universal ribosomal protein uS19 family.</text>
</comment>
<reference key="1">
    <citation type="journal article" date="2009" name="BMC Evol. Biol.">
        <title>Nucleotide diversity of the Chlamydomonas reinhardtii plastid genome: addressing the mutational-hazard hypothesis.</title>
        <authorList>
            <person name="Smith D.R."/>
            <person name="Lee R.W."/>
        </authorList>
    </citation>
    <scope>NUCLEOTIDE SEQUENCE [LARGE SCALE GENOMIC DNA]</scope>
    <source>
        <strain>CC-503</strain>
    </source>
</reference>
<reference key="2">
    <citation type="journal article" date="2002" name="Plant Cell">
        <title>Proteomic characterization of the small subunit of Chlamydomonas reinhardtii chloroplast ribosome: identification of a novel S1 domain-containing protein and unusually large orthologs of bacterial S2, S3, and S5.</title>
        <authorList>
            <person name="Yamaguchi K."/>
            <person name="Prieto S."/>
            <person name="Beligni M.V."/>
            <person name="Haynes P.A."/>
            <person name="McDonald W.H."/>
            <person name="Yates J.R. III"/>
            <person name="Mayfield S.P."/>
        </authorList>
    </citation>
    <scope>PROTEIN SEQUENCE OF 7-17</scope>
    <source>
        <strain>Arg7/cw15</strain>
    </source>
</reference>
<reference key="3">
    <citation type="journal article" date="2002" name="Plant Cell">
        <title>The Chlamydomonas reinhardtii plastid chromosome: islands of genes in a sea of repeats.</title>
        <authorList>
            <person name="Maul J.E."/>
            <person name="Lilly J.W."/>
            <person name="Cui L."/>
            <person name="dePamphilis C.W."/>
            <person name="Miller W."/>
            <person name="Harris E.H."/>
            <person name="Stern D.B."/>
        </authorList>
    </citation>
    <scope>IDENTIFICATION</scope>
    <scope>COMPLETE PLASTID GENOME</scope>
</reference>
<organism>
    <name type="scientific">Chlamydomonas reinhardtii</name>
    <name type="common">Chlamydomonas smithii</name>
    <dbReference type="NCBI Taxonomy" id="3055"/>
    <lineage>
        <taxon>Eukaryota</taxon>
        <taxon>Viridiplantae</taxon>
        <taxon>Chlorophyta</taxon>
        <taxon>core chlorophytes</taxon>
        <taxon>Chlorophyceae</taxon>
        <taxon>CS clade</taxon>
        <taxon>Chlamydomonadales</taxon>
        <taxon>Chlamydomonadaceae</taxon>
        <taxon>Chlamydomonas</taxon>
    </lineage>
</organism>
<gene>
    <name type="primary">rps19</name>
</gene>
<feature type="chain" id="PRO_0000129958" description="Small ribosomal subunit protein uS19c">
    <location>
        <begin position="1"/>
        <end position="92"/>
    </location>
</feature>
<feature type="region of interest" description="Disordered" evidence="2">
    <location>
        <begin position="73"/>
        <end position="92"/>
    </location>
</feature>
<feature type="compositionally biased region" description="Basic residues" evidence="2">
    <location>
        <begin position="80"/>
        <end position="92"/>
    </location>
</feature>
<keyword id="KW-0150">Chloroplast</keyword>
<keyword id="KW-0903">Direct protein sequencing</keyword>
<keyword id="KW-0934">Plastid</keyword>
<keyword id="KW-1185">Reference proteome</keyword>
<keyword id="KW-0687">Ribonucleoprotein</keyword>
<keyword id="KW-0689">Ribosomal protein</keyword>
<keyword id="KW-0694">RNA-binding</keyword>
<keyword id="KW-0699">rRNA-binding</keyword>
<geneLocation type="chloroplast"/>
<sequence length="92" mass="10437">MSRSLKKGPFVADHLLKKIEKLNAKGKKVVIKTWSRSSMIVPPMIGHTIGVYNGREHIPVFVSDQMVGHRLGEFSPTRTYRGHAKKDKKAKR</sequence>
<evidence type="ECO:0000250" key="1"/>
<evidence type="ECO:0000256" key="2">
    <source>
        <dbReference type="SAM" id="MobiDB-lite"/>
    </source>
</evidence>
<evidence type="ECO:0000305" key="3"/>